<gene>
    <name evidence="1" type="primary">cysJ</name>
    <name type="ordered locus">Spro_0810</name>
</gene>
<dbReference type="EC" id="1.8.1.2" evidence="1"/>
<dbReference type="EMBL" id="CP000826">
    <property type="protein sequence ID" value="ABV39916.1"/>
    <property type="molecule type" value="Genomic_DNA"/>
</dbReference>
<dbReference type="SMR" id="A8G9X6"/>
<dbReference type="STRING" id="399741.Spro_0810"/>
<dbReference type="KEGG" id="spe:Spro_0810"/>
<dbReference type="eggNOG" id="COG0369">
    <property type="taxonomic scope" value="Bacteria"/>
</dbReference>
<dbReference type="HOGENOM" id="CLU_001570_17_7_6"/>
<dbReference type="OrthoDB" id="9816402at2"/>
<dbReference type="UniPathway" id="UPA00140">
    <property type="reaction ID" value="UER00207"/>
</dbReference>
<dbReference type="GO" id="GO:0005829">
    <property type="term" value="C:cytosol"/>
    <property type="evidence" value="ECO:0007669"/>
    <property type="project" value="TreeGrafter"/>
</dbReference>
<dbReference type="GO" id="GO:0050660">
    <property type="term" value="F:flavin adenine dinucleotide binding"/>
    <property type="evidence" value="ECO:0007669"/>
    <property type="project" value="InterPro"/>
</dbReference>
<dbReference type="GO" id="GO:0010181">
    <property type="term" value="F:FMN binding"/>
    <property type="evidence" value="ECO:0007669"/>
    <property type="project" value="InterPro"/>
</dbReference>
<dbReference type="GO" id="GO:0004783">
    <property type="term" value="F:sulfite reductase (NADPH) activity"/>
    <property type="evidence" value="ECO:0007669"/>
    <property type="project" value="UniProtKB-UniRule"/>
</dbReference>
<dbReference type="GO" id="GO:0019344">
    <property type="term" value="P:cysteine biosynthetic process"/>
    <property type="evidence" value="ECO:0007669"/>
    <property type="project" value="UniProtKB-KW"/>
</dbReference>
<dbReference type="GO" id="GO:0070814">
    <property type="term" value="P:hydrogen sulfide biosynthetic process"/>
    <property type="evidence" value="ECO:0007669"/>
    <property type="project" value="UniProtKB-UniRule"/>
</dbReference>
<dbReference type="GO" id="GO:0000103">
    <property type="term" value="P:sulfate assimilation"/>
    <property type="evidence" value="ECO:0007669"/>
    <property type="project" value="UniProtKB-UniRule"/>
</dbReference>
<dbReference type="CDD" id="cd06199">
    <property type="entry name" value="SiR"/>
    <property type="match status" value="1"/>
</dbReference>
<dbReference type="FunFam" id="3.40.50.80:FF:000001">
    <property type="entry name" value="NADPH--cytochrome P450 reductase 1"/>
    <property type="match status" value="1"/>
</dbReference>
<dbReference type="FunFam" id="1.20.990.10:FF:000004">
    <property type="entry name" value="Sulfite reductase [NADPH] flavoprotein alpha-component"/>
    <property type="match status" value="1"/>
</dbReference>
<dbReference type="FunFam" id="3.40.50.360:FF:000018">
    <property type="entry name" value="Sulfite reductase [NADPH] flavoprotein alpha-component"/>
    <property type="match status" value="1"/>
</dbReference>
<dbReference type="Gene3D" id="3.40.50.360">
    <property type="match status" value="1"/>
</dbReference>
<dbReference type="Gene3D" id="1.20.990.10">
    <property type="entry name" value="NADPH-cytochrome p450 Reductase, Chain A, domain 3"/>
    <property type="match status" value="1"/>
</dbReference>
<dbReference type="Gene3D" id="3.40.50.80">
    <property type="entry name" value="Nucleotide-binding domain of ferredoxin-NADP reductase (FNR) module"/>
    <property type="match status" value="1"/>
</dbReference>
<dbReference type="Gene3D" id="2.40.30.10">
    <property type="entry name" value="Translation factors"/>
    <property type="match status" value="1"/>
</dbReference>
<dbReference type="HAMAP" id="MF_01541">
    <property type="entry name" value="CysJ"/>
    <property type="match status" value="1"/>
</dbReference>
<dbReference type="InterPro" id="IPR010199">
    <property type="entry name" value="CysJ"/>
</dbReference>
<dbReference type="InterPro" id="IPR003097">
    <property type="entry name" value="CysJ-like_FAD-binding"/>
</dbReference>
<dbReference type="InterPro" id="IPR029758">
    <property type="entry name" value="CysJ_Proteobact"/>
</dbReference>
<dbReference type="InterPro" id="IPR017927">
    <property type="entry name" value="FAD-bd_FR_type"/>
</dbReference>
<dbReference type="InterPro" id="IPR001094">
    <property type="entry name" value="Flavdoxin-like"/>
</dbReference>
<dbReference type="InterPro" id="IPR008254">
    <property type="entry name" value="Flavodoxin/NO_synth"/>
</dbReference>
<dbReference type="InterPro" id="IPR001709">
    <property type="entry name" value="Flavoprot_Pyr_Nucl_cyt_Rdtase"/>
</dbReference>
<dbReference type="InterPro" id="IPR029039">
    <property type="entry name" value="Flavoprotein-like_sf"/>
</dbReference>
<dbReference type="InterPro" id="IPR039261">
    <property type="entry name" value="FNR_nucleotide-bd"/>
</dbReference>
<dbReference type="InterPro" id="IPR023173">
    <property type="entry name" value="NADPH_Cyt_P450_Rdtase_alpha"/>
</dbReference>
<dbReference type="InterPro" id="IPR001433">
    <property type="entry name" value="OxRdtase_FAD/NAD-bd"/>
</dbReference>
<dbReference type="InterPro" id="IPR017938">
    <property type="entry name" value="Riboflavin_synthase-like_b-brl"/>
</dbReference>
<dbReference type="NCBIfam" id="TIGR01931">
    <property type="entry name" value="cysJ"/>
    <property type="match status" value="1"/>
</dbReference>
<dbReference type="NCBIfam" id="NF008197">
    <property type="entry name" value="PRK10953.1"/>
    <property type="match status" value="1"/>
</dbReference>
<dbReference type="PANTHER" id="PTHR19384:SF128">
    <property type="entry name" value="NADPH OXIDOREDUCTASE A"/>
    <property type="match status" value="1"/>
</dbReference>
<dbReference type="PANTHER" id="PTHR19384">
    <property type="entry name" value="NITRIC OXIDE SYNTHASE-RELATED"/>
    <property type="match status" value="1"/>
</dbReference>
<dbReference type="Pfam" id="PF00667">
    <property type="entry name" value="FAD_binding_1"/>
    <property type="match status" value="1"/>
</dbReference>
<dbReference type="Pfam" id="PF00258">
    <property type="entry name" value="Flavodoxin_1"/>
    <property type="match status" value="1"/>
</dbReference>
<dbReference type="Pfam" id="PF00175">
    <property type="entry name" value="NAD_binding_1"/>
    <property type="match status" value="1"/>
</dbReference>
<dbReference type="PIRSF" id="PIRSF000207">
    <property type="entry name" value="SiR-FP_CysJ"/>
    <property type="match status" value="1"/>
</dbReference>
<dbReference type="PRINTS" id="PR00369">
    <property type="entry name" value="FLAVODOXIN"/>
</dbReference>
<dbReference type="PRINTS" id="PR00371">
    <property type="entry name" value="FPNCR"/>
</dbReference>
<dbReference type="SUPFAM" id="SSF52343">
    <property type="entry name" value="Ferredoxin reductase-like, C-terminal NADP-linked domain"/>
    <property type="match status" value="1"/>
</dbReference>
<dbReference type="SUPFAM" id="SSF52218">
    <property type="entry name" value="Flavoproteins"/>
    <property type="match status" value="1"/>
</dbReference>
<dbReference type="SUPFAM" id="SSF63380">
    <property type="entry name" value="Riboflavin synthase domain-like"/>
    <property type="match status" value="1"/>
</dbReference>
<dbReference type="PROSITE" id="PS51384">
    <property type="entry name" value="FAD_FR"/>
    <property type="match status" value="1"/>
</dbReference>
<dbReference type="PROSITE" id="PS50902">
    <property type="entry name" value="FLAVODOXIN_LIKE"/>
    <property type="match status" value="1"/>
</dbReference>
<protein>
    <recommendedName>
        <fullName evidence="1">Sulfite reductase [NADPH] flavoprotein alpha-component</fullName>
        <shortName evidence="1">SiR-FP</shortName>
        <ecNumber evidence="1">1.8.1.2</ecNumber>
    </recommendedName>
</protein>
<accession>A8G9X6</accession>
<evidence type="ECO:0000255" key="1">
    <source>
        <dbReference type="HAMAP-Rule" id="MF_01541"/>
    </source>
</evidence>
<name>CYSJ_SERP5</name>
<organism>
    <name type="scientific">Serratia proteamaculans (strain 568)</name>
    <dbReference type="NCBI Taxonomy" id="399741"/>
    <lineage>
        <taxon>Bacteria</taxon>
        <taxon>Pseudomonadati</taxon>
        <taxon>Pseudomonadota</taxon>
        <taxon>Gammaproteobacteria</taxon>
        <taxon>Enterobacterales</taxon>
        <taxon>Yersiniaceae</taxon>
        <taxon>Serratia</taxon>
    </lineage>
</organism>
<proteinExistence type="inferred from homology"/>
<feature type="chain" id="PRO_1000087641" description="Sulfite reductase [NADPH] flavoprotein alpha-component">
    <location>
        <begin position="1"/>
        <end position="599"/>
    </location>
</feature>
<feature type="domain" description="Flavodoxin-like" evidence="1">
    <location>
        <begin position="63"/>
        <end position="201"/>
    </location>
</feature>
<feature type="domain" description="FAD-binding FR-type" evidence="1">
    <location>
        <begin position="234"/>
        <end position="448"/>
    </location>
</feature>
<feature type="binding site" evidence="1">
    <location>
        <begin position="69"/>
        <end position="74"/>
    </location>
    <ligand>
        <name>FMN</name>
        <dbReference type="ChEBI" id="CHEBI:58210"/>
    </ligand>
</feature>
<feature type="binding site" evidence="1">
    <location>
        <begin position="116"/>
        <end position="119"/>
    </location>
    <ligand>
        <name>FMN</name>
        <dbReference type="ChEBI" id="CHEBI:58210"/>
    </ligand>
</feature>
<feature type="binding site" evidence="1">
    <location>
        <begin position="152"/>
        <end position="161"/>
    </location>
    <ligand>
        <name>FMN</name>
        <dbReference type="ChEBI" id="CHEBI:58210"/>
    </ligand>
</feature>
<feature type="binding site" evidence="1">
    <location>
        <position position="322"/>
    </location>
    <ligand>
        <name>FAD</name>
        <dbReference type="ChEBI" id="CHEBI:57692"/>
    </ligand>
</feature>
<feature type="binding site" evidence="1">
    <location>
        <position position="356"/>
    </location>
    <ligand>
        <name>FAD</name>
        <dbReference type="ChEBI" id="CHEBI:57692"/>
    </ligand>
</feature>
<feature type="binding site" evidence="1">
    <location>
        <begin position="386"/>
        <end position="389"/>
    </location>
    <ligand>
        <name>FAD</name>
        <dbReference type="ChEBI" id="CHEBI:57692"/>
    </ligand>
</feature>
<feature type="binding site" evidence="1">
    <location>
        <begin position="404"/>
        <end position="406"/>
    </location>
    <ligand>
        <name>FAD</name>
        <dbReference type="ChEBI" id="CHEBI:57692"/>
    </ligand>
</feature>
<feature type="binding site" evidence="1">
    <location>
        <position position="410"/>
    </location>
    <ligand>
        <name>FAD</name>
        <dbReference type="ChEBI" id="CHEBI:57692"/>
    </ligand>
</feature>
<feature type="binding site" evidence="1">
    <location>
        <begin position="419"/>
        <end position="422"/>
    </location>
    <ligand>
        <name>FAD</name>
        <dbReference type="ChEBI" id="CHEBI:57692"/>
    </ligand>
</feature>
<feature type="binding site" evidence="1">
    <location>
        <begin position="519"/>
        <end position="520"/>
    </location>
    <ligand>
        <name>NADP(+)</name>
        <dbReference type="ChEBI" id="CHEBI:58349"/>
    </ligand>
</feature>
<feature type="binding site" evidence="1">
    <location>
        <begin position="525"/>
        <end position="529"/>
    </location>
    <ligand>
        <name>NADP(+)</name>
        <dbReference type="ChEBI" id="CHEBI:58349"/>
    </ligand>
</feature>
<feature type="binding site" evidence="1">
    <location>
        <position position="561"/>
    </location>
    <ligand>
        <name>NADP(+)</name>
        <dbReference type="ChEBI" id="CHEBI:58349"/>
    </ligand>
</feature>
<feature type="binding site" evidence="1">
    <location>
        <position position="599"/>
    </location>
    <ligand>
        <name>FAD</name>
        <dbReference type="ChEBI" id="CHEBI:57692"/>
    </ligand>
</feature>
<sequence length="599" mass="66202">MTTQAPPTSLLPLTPEQLARLQAAIGEYSPTQLAWLSGYFWGMVNQQPGSVAIAPVASAAASITVISASQTGNARRLAEQLRDDLLAAKLSVTLVNAGDYKFKQIAQERLLVIVASTQGEGEPAEEAVALHKFLFSKKAPKLNETAFAVFGLGDTSYENFCQSGKDFDGKLAELGAERLVERVDADVEYQELATAWRKQVVEVLKARAPAENAAPGVLASGAVDLLDSSPYSKEQPLTAQLAVKQKITGRASDKDVRHIEIDLGDSGLRYRPGDALGVWFDNDPALVDELVQLLWLKGDEPVEVEGKTLPLAQALRSHFELTQNTTPIVDKYAALSRDEKLIGLLADKAALQHYAHNTPIVDMVRQAPADLNAEQLIGLLRPLTPRLYSIASSQAENENEVHVTVGVVRYDIDGRARAGGASSFLADRLEEDGDVRVFIEHNDNFRLPANPETPVIMIGPGTGIAPFRAFMQQRDADGAGGKNWLFFGNPHFTEDFLYQVEWQRYVKDGLLTRIDLAWSRDQQHKVYVQDKLREQGAEVWRWIQEGAHIYVCGDANRMAKDVENTLLELVAEHGGMDTELADEFLSELRLERRYQRDVY</sequence>
<reference key="1">
    <citation type="submission" date="2007-09" db="EMBL/GenBank/DDBJ databases">
        <title>Complete sequence of chromosome of Serratia proteamaculans 568.</title>
        <authorList>
            <consortium name="US DOE Joint Genome Institute"/>
            <person name="Copeland A."/>
            <person name="Lucas S."/>
            <person name="Lapidus A."/>
            <person name="Barry K."/>
            <person name="Glavina del Rio T."/>
            <person name="Dalin E."/>
            <person name="Tice H."/>
            <person name="Pitluck S."/>
            <person name="Chain P."/>
            <person name="Malfatti S."/>
            <person name="Shin M."/>
            <person name="Vergez L."/>
            <person name="Schmutz J."/>
            <person name="Larimer F."/>
            <person name="Land M."/>
            <person name="Hauser L."/>
            <person name="Kyrpides N."/>
            <person name="Kim E."/>
            <person name="Taghavi S."/>
            <person name="Newman L."/>
            <person name="Vangronsveld J."/>
            <person name="van der Lelie D."/>
            <person name="Richardson P."/>
        </authorList>
    </citation>
    <scope>NUCLEOTIDE SEQUENCE [LARGE SCALE GENOMIC DNA]</scope>
    <source>
        <strain>568</strain>
    </source>
</reference>
<comment type="function">
    <text evidence="1">Component of the sulfite reductase complex that catalyzes the 6-electron reduction of sulfite to sulfide. This is one of several activities required for the biosynthesis of L-cysteine from sulfate. The flavoprotein component catalyzes the electron flow from NADPH -&gt; FAD -&gt; FMN to the hemoprotein component.</text>
</comment>
<comment type="catalytic activity">
    <reaction evidence="1">
        <text>hydrogen sulfide + 3 NADP(+) + 3 H2O = sulfite + 3 NADPH + 4 H(+)</text>
        <dbReference type="Rhea" id="RHEA:13801"/>
        <dbReference type="ChEBI" id="CHEBI:15377"/>
        <dbReference type="ChEBI" id="CHEBI:15378"/>
        <dbReference type="ChEBI" id="CHEBI:17359"/>
        <dbReference type="ChEBI" id="CHEBI:29919"/>
        <dbReference type="ChEBI" id="CHEBI:57783"/>
        <dbReference type="ChEBI" id="CHEBI:58349"/>
        <dbReference type="EC" id="1.8.1.2"/>
    </reaction>
</comment>
<comment type="cofactor">
    <cofactor evidence="1">
        <name>FAD</name>
        <dbReference type="ChEBI" id="CHEBI:57692"/>
    </cofactor>
    <text evidence="1">Binds 1 FAD per subunit.</text>
</comment>
<comment type="cofactor">
    <cofactor evidence="1">
        <name>FMN</name>
        <dbReference type="ChEBI" id="CHEBI:58210"/>
    </cofactor>
    <text evidence="1">Binds 1 FMN per subunit.</text>
</comment>
<comment type="pathway">
    <text evidence="1">Sulfur metabolism; hydrogen sulfide biosynthesis; hydrogen sulfide from sulfite (NADPH route): step 1/1.</text>
</comment>
<comment type="subunit">
    <text evidence="1">Alpha(8)-beta(8). The alpha component is a flavoprotein, the beta component is a hemoprotein.</text>
</comment>
<comment type="similarity">
    <text evidence="1">Belongs to the NADPH-dependent sulphite reductase flavoprotein subunit CysJ family.</text>
</comment>
<comment type="similarity">
    <text evidence="1">In the N-terminal section; belongs to the flavodoxin family.</text>
</comment>
<comment type="similarity">
    <text evidence="1">In the C-terminal section; belongs to the flavoprotein pyridine nucleotide cytochrome reductase family.</text>
</comment>
<keyword id="KW-0028">Amino-acid biosynthesis</keyword>
<keyword id="KW-0198">Cysteine biosynthesis</keyword>
<keyword id="KW-0249">Electron transport</keyword>
<keyword id="KW-0274">FAD</keyword>
<keyword id="KW-0285">Flavoprotein</keyword>
<keyword id="KW-0288">FMN</keyword>
<keyword id="KW-0521">NADP</keyword>
<keyword id="KW-0560">Oxidoreductase</keyword>
<keyword id="KW-0813">Transport</keyword>